<evidence type="ECO:0000255" key="1">
    <source>
        <dbReference type="HAMAP-Rule" id="MF_00407"/>
    </source>
</evidence>
<comment type="function">
    <text evidence="1">DNA ligase that seals nicks in double-stranded DNA during DNA replication, DNA recombination and DNA repair.</text>
</comment>
<comment type="catalytic activity">
    <reaction evidence="1">
        <text>ATP + (deoxyribonucleotide)n-3'-hydroxyl + 5'-phospho-(deoxyribonucleotide)m = (deoxyribonucleotide)n+m + AMP + diphosphate.</text>
        <dbReference type="EC" id="6.5.1.1"/>
    </reaction>
</comment>
<comment type="cofactor">
    <cofactor evidence="1">
        <name>Mg(2+)</name>
        <dbReference type="ChEBI" id="CHEBI:18420"/>
    </cofactor>
</comment>
<comment type="similarity">
    <text evidence="1">Belongs to the ATP-dependent DNA ligase family.</text>
</comment>
<sequence>MRYIELAQLYQKLEKTTMKLIKTRLVADFLKKVPEDHLEFIPYLILGDVFPEWDERELGVGEKLLIKAVSMATGIDSKEIENSVKDTGDLGESIALAVKRRKQKSFFSQPLTIKRVYQTLVKVAETTGEGSQDKKMKYLANLFMDAEPIEAKYIARTVLGTMRTGVAEGLLRDAISLAFNVKVELVERAYMLTSDFGFVAKIAKTEGNDGLAKVTIQIGKPIKPMLAQQAANIKEALLEMGGEAEFEIKYDGARVQVHKDGEKVTIYSRRLENVTRAIPEIVEAIKEALKPAKAIVEGELVAIGEDGRPLPFQYVLRRFRRKYNIEEMMEKIPLELNLFDVLYVDGVSLIDTKFMERRKKLEEIVEANGKVKIAENLITKNVEEAEQFYKRALEMGHEGLMAKRLDAIYEPGNRGKKWLKIKPTMENLDLVIIGAEWGEGRRAHLLGSFILGAYDPETGEFLEVGKVGSGFTDDDLVEFTKMLRPLIIKEEGKRVWIQPKVVIEVTYQEIQKSPKYRSGFALRFPRYVALREDKGPEDADTIERIAQLYELQERMKGKV</sequence>
<organism>
    <name type="scientific">Pyrococcus abyssi</name>
    <dbReference type="NCBI Taxonomy" id="29292"/>
    <lineage>
        <taxon>Archaea</taxon>
        <taxon>Methanobacteriati</taxon>
        <taxon>Methanobacteriota</taxon>
        <taxon>Thermococci</taxon>
        <taxon>Thermococcales</taxon>
        <taxon>Thermococcaceae</taxon>
        <taxon>Pyrococcus</taxon>
    </lineage>
</organism>
<gene>
    <name evidence="1" type="primary">lig</name>
</gene>
<keyword id="KW-0067">ATP-binding</keyword>
<keyword id="KW-0131">Cell cycle</keyword>
<keyword id="KW-0132">Cell division</keyword>
<keyword id="KW-0227">DNA damage</keyword>
<keyword id="KW-0233">DNA recombination</keyword>
<keyword id="KW-0234">DNA repair</keyword>
<keyword id="KW-0235">DNA replication</keyword>
<keyword id="KW-0436">Ligase</keyword>
<keyword id="KW-0460">Magnesium</keyword>
<keyword id="KW-0479">Metal-binding</keyword>
<keyword id="KW-0547">Nucleotide-binding</keyword>
<dbReference type="EC" id="6.5.1.1" evidence="1"/>
<dbReference type="EMBL" id="AJ006532">
    <property type="protein sequence ID" value="CAC20743.1"/>
    <property type="molecule type" value="Genomic_DNA"/>
</dbReference>
<dbReference type="SMR" id="P0CL74"/>
<dbReference type="BRENDA" id="6.5.1.1">
    <property type="organism ID" value="5242"/>
</dbReference>
<dbReference type="GO" id="GO:0005524">
    <property type="term" value="F:ATP binding"/>
    <property type="evidence" value="ECO:0007669"/>
    <property type="project" value="UniProtKB-UniRule"/>
</dbReference>
<dbReference type="GO" id="GO:0003677">
    <property type="term" value="F:DNA binding"/>
    <property type="evidence" value="ECO:0007669"/>
    <property type="project" value="InterPro"/>
</dbReference>
<dbReference type="GO" id="GO:0003910">
    <property type="term" value="F:DNA ligase (ATP) activity"/>
    <property type="evidence" value="ECO:0007669"/>
    <property type="project" value="UniProtKB-UniRule"/>
</dbReference>
<dbReference type="GO" id="GO:0046872">
    <property type="term" value="F:metal ion binding"/>
    <property type="evidence" value="ECO:0007669"/>
    <property type="project" value="UniProtKB-KW"/>
</dbReference>
<dbReference type="GO" id="GO:0051301">
    <property type="term" value="P:cell division"/>
    <property type="evidence" value="ECO:0007669"/>
    <property type="project" value="UniProtKB-KW"/>
</dbReference>
<dbReference type="GO" id="GO:0071897">
    <property type="term" value="P:DNA biosynthetic process"/>
    <property type="evidence" value="ECO:0007669"/>
    <property type="project" value="InterPro"/>
</dbReference>
<dbReference type="GO" id="GO:0006310">
    <property type="term" value="P:DNA recombination"/>
    <property type="evidence" value="ECO:0007669"/>
    <property type="project" value="UniProtKB-UniRule"/>
</dbReference>
<dbReference type="GO" id="GO:0006281">
    <property type="term" value="P:DNA repair"/>
    <property type="evidence" value="ECO:0007669"/>
    <property type="project" value="UniProtKB-UniRule"/>
</dbReference>
<dbReference type="GO" id="GO:0006273">
    <property type="term" value="P:lagging strand elongation"/>
    <property type="evidence" value="ECO:0007669"/>
    <property type="project" value="TreeGrafter"/>
</dbReference>
<dbReference type="CDD" id="cd07901">
    <property type="entry name" value="Adenylation_DNA_ligase_Arch_LigB"/>
    <property type="match status" value="1"/>
</dbReference>
<dbReference type="CDD" id="cd07972">
    <property type="entry name" value="OBF_DNA_ligase_Arch_LigB"/>
    <property type="match status" value="1"/>
</dbReference>
<dbReference type="FunFam" id="1.10.3260.10:FF:000007">
    <property type="entry name" value="DNA ligase"/>
    <property type="match status" value="1"/>
</dbReference>
<dbReference type="FunFam" id="2.40.50.140:FF:000163">
    <property type="entry name" value="Probable DNA ligase"/>
    <property type="match status" value="1"/>
</dbReference>
<dbReference type="FunFam" id="3.30.470.30:FF:000012">
    <property type="entry name" value="Probable DNA ligase"/>
    <property type="match status" value="1"/>
</dbReference>
<dbReference type="Gene3D" id="1.10.3260.10">
    <property type="entry name" value="DNA ligase, ATP-dependent, N-terminal domain"/>
    <property type="match status" value="1"/>
</dbReference>
<dbReference type="Gene3D" id="3.30.470.30">
    <property type="entry name" value="DNA ligase/mRNA capping enzyme"/>
    <property type="match status" value="1"/>
</dbReference>
<dbReference type="Gene3D" id="2.40.50.140">
    <property type="entry name" value="Nucleic acid-binding proteins"/>
    <property type="match status" value="1"/>
</dbReference>
<dbReference type="HAMAP" id="MF_00407">
    <property type="entry name" value="DNA_ligase"/>
    <property type="match status" value="1"/>
</dbReference>
<dbReference type="InterPro" id="IPR050191">
    <property type="entry name" value="ATP-dep_DNA_ligase"/>
</dbReference>
<dbReference type="InterPro" id="IPR022865">
    <property type="entry name" value="DNA_ligae_ATP-dep_bac/arc"/>
</dbReference>
<dbReference type="InterPro" id="IPR000977">
    <property type="entry name" value="DNA_ligase_ATP-dep"/>
</dbReference>
<dbReference type="InterPro" id="IPR012309">
    <property type="entry name" value="DNA_ligase_ATP-dep_C"/>
</dbReference>
<dbReference type="InterPro" id="IPR012310">
    <property type="entry name" value="DNA_ligase_ATP-dep_cent"/>
</dbReference>
<dbReference type="InterPro" id="IPR016059">
    <property type="entry name" value="DNA_ligase_ATP-dep_CS"/>
</dbReference>
<dbReference type="InterPro" id="IPR012308">
    <property type="entry name" value="DNA_ligase_ATP-dep_N"/>
</dbReference>
<dbReference type="InterPro" id="IPR036599">
    <property type="entry name" value="DNA_ligase_N_sf"/>
</dbReference>
<dbReference type="InterPro" id="IPR012340">
    <property type="entry name" value="NA-bd_OB-fold"/>
</dbReference>
<dbReference type="NCBIfam" id="TIGR00574">
    <property type="entry name" value="dnl1"/>
    <property type="match status" value="1"/>
</dbReference>
<dbReference type="PANTHER" id="PTHR45674:SF7">
    <property type="entry name" value="DNA LIGASE"/>
    <property type="match status" value="1"/>
</dbReference>
<dbReference type="PANTHER" id="PTHR45674">
    <property type="entry name" value="DNA LIGASE 1/3 FAMILY MEMBER"/>
    <property type="match status" value="1"/>
</dbReference>
<dbReference type="Pfam" id="PF04679">
    <property type="entry name" value="DNA_ligase_A_C"/>
    <property type="match status" value="1"/>
</dbReference>
<dbReference type="Pfam" id="PF01068">
    <property type="entry name" value="DNA_ligase_A_M"/>
    <property type="match status" value="1"/>
</dbReference>
<dbReference type="Pfam" id="PF04675">
    <property type="entry name" value="DNA_ligase_A_N"/>
    <property type="match status" value="1"/>
</dbReference>
<dbReference type="SUPFAM" id="SSF117018">
    <property type="entry name" value="ATP-dependent DNA ligase DNA-binding domain"/>
    <property type="match status" value="1"/>
</dbReference>
<dbReference type="SUPFAM" id="SSF56091">
    <property type="entry name" value="DNA ligase/mRNA capping enzyme, catalytic domain"/>
    <property type="match status" value="1"/>
</dbReference>
<dbReference type="SUPFAM" id="SSF50249">
    <property type="entry name" value="Nucleic acid-binding proteins"/>
    <property type="match status" value="1"/>
</dbReference>
<dbReference type="PROSITE" id="PS00697">
    <property type="entry name" value="DNA_LIGASE_A1"/>
    <property type="match status" value="1"/>
</dbReference>
<dbReference type="PROSITE" id="PS00333">
    <property type="entry name" value="DNA_LIGASE_A2"/>
    <property type="match status" value="1"/>
</dbReference>
<dbReference type="PROSITE" id="PS50160">
    <property type="entry name" value="DNA_LIGASE_A3"/>
    <property type="match status" value="1"/>
</dbReference>
<proteinExistence type="inferred from homology"/>
<protein>
    <recommendedName>
        <fullName evidence="1">DNA ligase</fullName>
        <ecNumber evidence="1">6.5.1.1</ecNumber>
    </recommendedName>
    <alternativeName>
        <fullName evidence="1">Polydeoxyribonucleotide synthase [ATP]</fullName>
    </alternativeName>
</protein>
<reference key="1">
    <citation type="submission" date="1998-06" db="EMBL/GenBank/DDBJ databases">
        <title>Cloning and expression of a new thermostable DNA ligase from the hyperthermophilic Pyrococcus abyssi sp. ST 549.</title>
        <authorList>
            <person name="Rolland J.L."/>
            <person name="Dietrich J."/>
        </authorList>
    </citation>
    <scope>NUCLEOTIDE SEQUENCE [GENOMIC DNA]</scope>
    <source>
        <strain>ST 549</strain>
    </source>
</reference>
<accession>P0CL74</accession>
<accession>Q9HH10</accession>
<accession>Q9V185</accession>
<feature type="chain" id="PRO_0000059612" description="DNA ligase">
    <location>
        <begin position="1"/>
        <end position="559"/>
    </location>
</feature>
<feature type="active site" description="N6-AMP-lysine intermediate" evidence="1">
    <location>
        <position position="249"/>
    </location>
</feature>
<feature type="binding site" evidence="1">
    <location>
        <position position="247"/>
    </location>
    <ligand>
        <name>ATP</name>
        <dbReference type="ChEBI" id="CHEBI:30616"/>
    </ligand>
</feature>
<feature type="binding site" evidence="1">
    <location>
        <position position="254"/>
    </location>
    <ligand>
        <name>ATP</name>
        <dbReference type="ChEBI" id="CHEBI:30616"/>
    </ligand>
</feature>
<feature type="binding site" evidence="1">
    <location>
        <position position="269"/>
    </location>
    <ligand>
        <name>ATP</name>
        <dbReference type="ChEBI" id="CHEBI:30616"/>
    </ligand>
</feature>
<feature type="binding site" evidence="1">
    <location>
        <position position="299"/>
    </location>
    <ligand>
        <name>ATP</name>
        <dbReference type="ChEBI" id="CHEBI:30616"/>
    </ligand>
</feature>
<feature type="binding site" evidence="1">
    <location>
        <position position="339"/>
    </location>
    <ligand>
        <name>ATP</name>
        <dbReference type="ChEBI" id="CHEBI:30616"/>
    </ligand>
</feature>
<feature type="binding site" evidence="1">
    <location>
        <position position="414"/>
    </location>
    <ligand>
        <name>ATP</name>
        <dbReference type="ChEBI" id="CHEBI:30616"/>
    </ligand>
</feature>
<feature type="binding site" evidence="1">
    <location>
        <position position="420"/>
    </location>
    <ligand>
        <name>ATP</name>
        <dbReference type="ChEBI" id="CHEBI:30616"/>
    </ligand>
</feature>
<name>DNLI_PYRAY</name>